<dbReference type="EC" id="4.1.1.23" evidence="1"/>
<dbReference type="EMBL" id="AM920689">
    <property type="protein sequence ID" value="CAP53716.1"/>
    <property type="molecule type" value="Genomic_DNA"/>
</dbReference>
<dbReference type="SMR" id="B0RZ30"/>
<dbReference type="KEGG" id="xca:xcc-b100_4346"/>
<dbReference type="HOGENOM" id="CLU_067069_1_0_6"/>
<dbReference type="UniPathway" id="UPA00070">
    <property type="reaction ID" value="UER00120"/>
</dbReference>
<dbReference type="Proteomes" id="UP000001188">
    <property type="component" value="Chromosome"/>
</dbReference>
<dbReference type="GO" id="GO:0005829">
    <property type="term" value="C:cytosol"/>
    <property type="evidence" value="ECO:0007669"/>
    <property type="project" value="TreeGrafter"/>
</dbReference>
<dbReference type="GO" id="GO:0004590">
    <property type="term" value="F:orotidine-5'-phosphate decarboxylase activity"/>
    <property type="evidence" value="ECO:0007669"/>
    <property type="project" value="UniProtKB-UniRule"/>
</dbReference>
<dbReference type="GO" id="GO:0006207">
    <property type="term" value="P:'de novo' pyrimidine nucleobase biosynthetic process"/>
    <property type="evidence" value="ECO:0007669"/>
    <property type="project" value="InterPro"/>
</dbReference>
<dbReference type="GO" id="GO:0044205">
    <property type="term" value="P:'de novo' UMP biosynthetic process"/>
    <property type="evidence" value="ECO:0007669"/>
    <property type="project" value="UniProtKB-UniRule"/>
</dbReference>
<dbReference type="CDD" id="cd04725">
    <property type="entry name" value="OMP_decarboxylase_like"/>
    <property type="match status" value="1"/>
</dbReference>
<dbReference type="FunFam" id="3.20.20.70:FF:000235">
    <property type="entry name" value="Orotidine 5'-phosphate decarboxylase"/>
    <property type="match status" value="1"/>
</dbReference>
<dbReference type="Gene3D" id="3.20.20.70">
    <property type="entry name" value="Aldolase class I"/>
    <property type="match status" value="1"/>
</dbReference>
<dbReference type="HAMAP" id="MF_01200_B">
    <property type="entry name" value="OMPdecase_type1_B"/>
    <property type="match status" value="1"/>
</dbReference>
<dbReference type="InterPro" id="IPR013785">
    <property type="entry name" value="Aldolase_TIM"/>
</dbReference>
<dbReference type="InterPro" id="IPR014732">
    <property type="entry name" value="OMPdecase"/>
</dbReference>
<dbReference type="InterPro" id="IPR018089">
    <property type="entry name" value="OMPdecase_AS"/>
</dbReference>
<dbReference type="InterPro" id="IPR047596">
    <property type="entry name" value="OMPdecase_bac"/>
</dbReference>
<dbReference type="InterPro" id="IPR001754">
    <property type="entry name" value="OMPdeCOase_dom"/>
</dbReference>
<dbReference type="InterPro" id="IPR011060">
    <property type="entry name" value="RibuloseP-bd_barrel"/>
</dbReference>
<dbReference type="NCBIfam" id="NF001273">
    <property type="entry name" value="PRK00230.1"/>
    <property type="match status" value="1"/>
</dbReference>
<dbReference type="NCBIfam" id="TIGR01740">
    <property type="entry name" value="pyrF"/>
    <property type="match status" value="1"/>
</dbReference>
<dbReference type="PANTHER" id="PTHR32119">
    <property type="entry name" value="OROTIDINE 5'-PHOSPHATE DECARBOXYLASE"/>
    <property type="match status" value="1"/>
</dbReference>
<dbReference type="PANTHER" id="PTHR32119:SF2">
    <property type="entry name" value="OROTIDINE 5'-PHOSPHATE DECARBOXYLASE"/>
    <property type="match status" value="1"/>
</dbReference>
<dbReference type="Pfam" id="PF00215">
    <property type="entry name" value="OMPdecase"/>
    <property type="match status" value="1"/>
</dbReference>
<dbReference type="SMART" id="SM00934">
    <property type="entry name" value="OMPdecase"/>
    <property type="match status" value="1"/>
</dbReference>
<dbReference type="SUPFAM" id="SSF51366">
    <property type="entry name" value="Ribulose-phoshate binding barrel"/>
    <property type="match status" value="1"/>
</dbReference>
<dbReference type="PROSITE" id="PS00156">
    <property type="entry name" value="OMPDECASE"/>
    <property type="match status" value="1"/>
</dbReference>
<proteinExistence type="inferred from homology"/>
<comment type="function">
    <text evidence="1">Catalyzes the decarboxylation of orotidine 5'-monophosphate (OMP) to uridine 5'-monophosphate (UMP).</text>
</comment>
<comment type="catalytic activity">
    <reaction evidence="1">
        <text>orotidine 5'-phosphate + H(+) = UMP + CO2</text>
        <dbReference type="Rhea" id="RHEA:11596"/>
        <dbReference type="ChEBI" id="CHEBI:15378"/>
        <dbReference type="ChEBI" id="CHEBI:16526"/>
        <dbReference type="ChEBI" id="CHEBI:57538"/>
        <dbReference type="ChEBI" id="CHEBI:57865"/>
        <dbReference type="EC" id="4.1.1.23"/>
    </reaction>
</comment>
<comment type="pathway">
    <text evidence="1">Pyrimidine metabolism; UMP biosynthesis via de novo pathway; UMP from orotate: step 2/2.</text>
</comment>
<comment type="subunit">
    <text evidence="1">Homodimer.</text>
</comment>
<comment type="similarity">
    <text evidence="1">Belongs to the OMP decarboxylase family. Type 1 subfamily.</text>
</comment>
<accession>B0RZ30</accession>
<gene>
    <name evidence="1" type="primary">pyrF</name>
    <name type="ordered locus">xcc-b100_4346</name>
</gene>
<organism>
    <name type="scientific">Xanthomonas campestris pv. campestris (strain B100)</name>
    <dbReference type="NCBI Taxonomy" id="509169"/>
    <lineage>
        <taxon>Bacteria</taxon>
        <taxon>Pseudomonadati</taxon>
        <taxon>Pseudomonadota</taxon>
        <taxon>Gammaproteobacteria</taxon>
        <taxon>Lysobacterales</taxon>
        <taxon>Lysobacteraceae</taxon>
        <taxon>Xanthomonas</taxon>
    </lineage>
</organism>
<name>PYRF_XANCB</name>
<protein>
    <recommendedName>
        <fullName evidence="1">Orotidine 5'-phosphate decarboxylase</fullName>
        <ecNumber evidence="1">4.1.1.23</ecNumber>
    </recommendedName>
    <alternativeName>
        <fullName evidence="1">OMP decarboxylase</fullName>
        <shortName evidence="1">OMPDCase</shortName>
        <shortName evidence="1">OMPdecase</shortName>
    </alternativeName>
</protein>
<feature type="chain" id="PRO_1000138570" description="Orotidine 5'-phosphate decarboxylase">
    <location>
        <begin position="1"/>
        <end position="243"/>
    </location>
</feature>
<feature type="active site" description="Proton donor" evidence="1">
    <location>
        <position position="71"/>
    </location>
</feature>
<feature type="binding site" evidence="1">
    <location>
        <position position="19"/>
    </location>
    <ligand>
        <name>substrate</name>
    </ligand>
</feature>
<feature type="binding site" evidence="1">
    <location>
        <position position="41"/>
    </location>
    <ligand>
        <name>substrate</name>
    </ligand>
</feature>
<feature type="binding site" evidence="1">
    <location>
        <begin position="69"/>
        <end position="78"/>
    </location>
    <ligand>
        <name>substrate</name>
    </ligand>
</feature>
<feature type="binding site" evidence="1">
    <location>
        <position position="124"/>
    </location>
    <ligand>
        <name>substrate</name>
    </ligand>
</feature>
<feature type="binding site" evidence="1">
    <location>
        <position position="185"/>
    </location>
    <ligand>
        <name>substrate</name>
    </ligand>
</feature>
<feature type="binding site" evidence="1">
    <location>
        <position position="194"/>
    </location>
    <ligand>
        <name>substrate</name>
    </ligand>
</feature>
<feature type="binding site" evidence="1">
    <location>
        <position position="214"/>
    </location>
    <ligand>
        <name>substrate</name>
    </ligand>
</feature>
<feature type="binding site" evidence="1">
    <location>
        <position position="215"/>
    </location>
    <ligand>
        <name>substrate</name>
    </ligand>
</feature>
<reference key="1">
    <citation type="journal article" date="2008" name="J. Biotechnol.">
        <title>The genome of Xanthomonas campestris pv. campestris B100 and its use for the reconstruction of metabolic pathways involved in xanthan biosynthesis.</title>
        <authorList>
            <person name="Vorhoelter F.-J."/>
            <person name="Schneiker S."/>
            <person name="Goesmann A."/>
            <person name="Krause L."/>
            <person name="Bekel T."/>
            <person name="Kaiser O."/>
            <person name="Linke B."/>
            <person name="Patschkowski T."/>
            <person name="Rueckert C."/>
            <person name="Schmid J."/>
            <person name="Sidhu V.K."/>
            <person name="Sieber V."/>
            <person name="Tauch A."/>
            <person name="Watt S.A."/>
            <person name="Weisshaar B."/>
            <person name="Becker A."/>
            <person name="Niehaus K."/>
            <person name="Puehler A."/>
        </authorList>
    </citation>
    <scope>NUCLEOTIDE SEQUENCE [LARGE SCALE GENOMIC DNA]</scope>
    <source>
        <strain>B100</strain>
    </source>
</reference>
<sequence length="243" mass="25602">MNRPPLPLAAHERLIFALDVPGHDEAIAWVDRLGESVAFYKIGMELLASGEYFHVLDALAKRNKRVFVDLKFFDIPATVAGTIRRLSQWPVSYCTVHGWHAGMLEAAAAANQGDMRLLAVTVLTSMGRPDLAAMGIDREPVDVVVERALAAQAAGIDGVIASGQEAGPIRRATGPAFSIVCPGIRPGGPVGDDQQRTVGVAQALADGADAIVVGRPIRLANDPAAAAAAIQAEIRAAVVPHRD</sequence>
<evidence type="ECO:0000255" key="1">
    <source>
        <dbReference type="HAMAP-Rule" id="MF_01200"/>
    </source>
</evidence>
<keyword id="KW-0210">Decarboxylase</keyword>
<keyword id="KW-0456">Lyase</keyword>
<keyword id="KW-0665">Pyrimidine biosynthesis</keyword>